<gene>
    <name type="primary">CET4</name>
</gene>
<name>CET4_TOBAC</name>
<dbReference type="EMBL" id="AF145261">
    <property type="protein sequence ID" value="AAD43530.1"/>
    <property type="molecule type" value="mRNA"/>
</dbReference>
<dbReference type="RefSeq" id="XP_016494013.1">
    <property type="nucleotide sequence ID" value="XM_016638527.1"/>
</dbReference>
<dbReference type="SMR" id="Q9XH42"/>
<dbReference type="STRING" id="4097.Q9XH42"/>
<dbReference type="PaxDb" id="4097-Q9XH42"/>
<dbReference type="KEGG" id="nta:107813281"/>
<dbReference type="OMA" id="PGIGIHR"/>
<dbReference type="OrthoDB" id="2506647at2759"/>
<dbReference type="PhylomeDB" id="Q9XH42"/>
<dbReference type="Proteomes" id="UP000084051">
    <property type="component" value="Unplaced"/>
</dbReference>
<dbReference type="GO" id="GO:0005737">
    <property type="term" value="C:cytoplasm"/>
    <property type="evidence" value="ECO:0000318"/>
    <property type="project" value="GO_Central"/>
</dbReference>
<dbReference type="GO" id="GO:0005634">
    <property type="term" value="C:nucleus"/>
    <property type="evidence" value="ECO:0000318"/>
    <property type="project" value="GO_Central"/>
</dbReference>
<dbReference type="GO" id="GO:0009910">
    <property type="term" value="P:negative regulation of flower development"/>
    <property type="evidence" value="ECO:0000318"/>
    <property type="project" value="GO_Central"/>
</dbReference>
<dbReference type="GO" id="GO:0010228">
    <property type="term" value="P:vegetative to reproductive phase transition of meristem"/>
    <property type="evidence" value="ECO:0000318"/>
    <property type="project" value="GO_Central"/>
</dbReference>
<dbReference type="CDD" id="cd00866">
    <property type="entry name" value="PEBP_euk"/>
    <property type="match status" value="1"/>
</dbReference>
<dbReference type="FunFam" id="3.90.280.10:FF:000001">
    <property type="entry name" value="Terminal flower 1"/>
    <property type="match status" value="1"/>
</dbReference>
<dbReference type="Gene3D" id="3.90.280.10">
    <property type="entry name" value="PEBP-like"/>
    <property type="match status" value="1"/>
</dbReference>
<dbReference type="InterPro" id="IPR008914">
    <property type="entry name" value="PEBP"/>
</dbReference>
<dbReference type="InterPro" id="IPR036610">
    <property type="entry name" value="PEBP-like_sf"/>
</dbReference>
<dbReference type="InterPro" id="IPR035810">
    <property type="entry name" value="PEBP_euk"/>
</dbReference>
<dbReference type="InterPro" id="IPR001858">
    <property type="entry name" value="Phosphatidylethanolamine-bd_CS"/>
</dbReference>
<dbReference type="PANTHER" id="PTHR11362">
    <property type="entry name" value="PHOSPHATIDYLETHANOLAMINE-BINDING PROTEIN"/>
    <property type="match status" value="1"/>
</dbReference>
<dbReference type="PANTHER" id="PTHR11362:SF48">
    <property type="entry name" value="PROTEIN CENTRORADIALIS-LIKE"/>
    <property type="match status" value="1"/>
</dbReference>
<dbReference type="Pfam" id="PF01161">
    <property type="entry name" value="PBP"/>
    <property type="match status" value="1"/>
</dbReference>
<dbReference type="SUPFAM" id="SSF49777">
    <property type="entry name" value="PEBP-like"/>
    <property type="match status" value="1"/>
</dbReference>
<dbReference type="PROSITE" id="PS01220">
    <property type="entry name" value="PBP"/>
    <property type="match status" value="1"/>
</dbReference>
<proteinExistence type="evidence at transcript level"/>
<comment type="function">
    <text evidence="1">May form complexes with phosphorylated ligands by interfering with kinases and their effectors.</text>
</comment>
<comment type="subcellular location">
    <subcellularLocation>
        <location evidence="1">Cytoplasm</location>
    </subcellularLocation>
</comment>
<comment type="tissue specificity">
    <text>Expressed in vegetative axillary meristems but not in the main shoot meristem.</text>
</comment>
<comment type="induction">
    <text>Down-regulated at the onset of flowering.</text>
</comment>
<comment type="similarity">
    <text evidence="2">Belongs to the phosphatidylethanolamine-binding protein family.</text>
</comment>
<organism>
    <name type="scientific">Nicotiana tabacum</name>
    <name type="common">Common tobacco</name>
    <dbReference type="NCBI Taxonomy" id="4097"/>
    <lineage>
        <taxon>Eukaryota</taxon>
        <taxon>Viridiplantae</taxon>
        <taxon>Streptophyta</taxon>
        <taxon>Embryophyta</taxon>
        <taxon>Tracheophyta</taxon>
        <taxon>Spermatophyta</taxon>
        <taxon>Magnoliopsida</taxon>
        <taxon>eudicotyledons</taxon>
        <taxon>Gunneridae</taxon>
        <taxon>Pentapetalae</taxon>
        <taxon>asterids</taxon>
        <taxon>lamiids</taxon>
        <taxon>Solanales</taxon>
        <taxon>Solanaceae</taxon>
        <taxon>Nicotianoideae</taxon>
        <taxon>Nicotianeae</taxon>
        <taxon>Nicotiana</taxon>
    </lineage>
</organism>
<accession>Q9XH42</accession>
<sequence>MGSKMSDPLVIGRVIGEVVDYFTPSVKMSVTYNSSKHVYNGHELFPSSVTSKPRVEVHGGDLRSFFTLIMIDPDVPGPSDPYLREHLHWIVTDIPGTTDCSFGREIVGYEMPRPNIGIHRFVFLLFKQKKRQTLLSAPLSRDRFNTRKFSEENELGSPVAAAFFNCQRETAARRR</sequence>
<reference key="1">
    <citation type="journal article" date="1999" name="Plant Cell">
        <title>Expression of CENTRORADIALIS (CEN) and CEN-like genes in tobacco reveals a conserved mechanism controlling phase change in diverse species.</title>
        <authorList>
            <person name="Amaya I."/>
            <person name="Ratcliffe O.J."/>
            <person name="Bradley D.J."/>
        </authorList>
    </citation>
    <scope>NUCLEOTIDE SEQUENCE [MRNA]</scope>
    <source>
        <strain>cv. Samsun</strain>
    </source>
</reference>
<keyword id="KW-0963">Cytoplasm</keyword>
<keyword id="KW-1185">Reference proteome</keyword>
<feature type="chain" id="PRO_0000204759" description="CEN-like protein 4">
    <location>
        <begin position="1"/>
        <end position="175"/>
    </location>
</feature>
<protein>
    <recommendedName>
        <fullName>CEN-like protein 4</fullName>
    </recommendedName>
</protein>
<evidence type="ECO:0000250" key="1"/>
<evidence type="ECO:0000305" key="2"/>